<reference key="1">
    <citation type="journal article" date="2005" name="Science">
        <title>Extensive DNA inversions in the B. fragilis genome control variable gene expression.</title>
        <authorList>
            <person name="Cerdeno-Tarraga A.-M."/>
            <person name="Patrick S."/>
            <person name="Crossman L.C."/>
            <person name="Blakely G."/>
            <person name="Abratt V."/>
            <person name="Lennard N."/>
            <person name="Poxton I."/>
            <person name="Duerden B."/>
            <person name="Harris B."/>
            <person name="Quail M.A."/>
            <person name="Barron A."/>
            <person name="Clark L."/>
            <person name="Corton C."/>
            <person name="Doggett J."/>
            <person name="Holden M.T.G."/>
            <person name="Larke N."/>
            <person name="Line A."/>
            <person name="Lord A."/>
            <person name="Norbertczak H."/>
            <person name="Ormond D."/>
            <person name="Price C."/>
            <person name="Rabbinowitsch E."/>
            <person name="Woodward J."/>
            <person name="Barrell B.G."/>
            <person name="Parkhill J."/>
        </authorList>
    </citation>
    <scope>NUCLEOTIDE SEQUENCE [LARGE SCALE GENOMIC DNA]</scope>
    <source>
        <strain>ATCC 25285 / DSM 2151 / CCUG 4856 / JCM 11019 / LMG 10263 / NCTC 9343 / Onslow / VPI 2553 / EN-2</strain>
    </source>
</reference>
<evidence type="ECO:0000255" key="1">
    <source>
        <dbReference type="HAMAP-Rule" id="MF_00124"/>
    </source>
</evidence>
<feature type="chain" id="PRO_0000174957" description="Thymidine kinase">
    <location>
        <begin position="1"/>
        <end position="199"/>
    </location>
</feature>
<feature type="active site" description="Proton acceptor" evidence="1">
    <location>
        <position position="96"/>
    </location>
</feature>
<feature type="binding site" evidence="1">
    <location>
        <begin position="23"/>
        <end position="30"/>
    </location>
    <ligand>
        <name>ATP</name>
        <dbReference type="ChEBI" id="CHEBI:30616"/>
    </ligand>
</feature>
<feature type="binding site" evidence="1">
    <location>
        <begin position="95"/>
        <end position="98"/>
    </location>
    <ligand>
        <name>ATP</name>
        <dbReference type="ChEBI" id="CHEBI:30616"/>
    </ligand>
</feature>
<feature type="binding site" evidence="1">
    <location>
        <position position="152"/>
    </location>
    <ligand>
        <name>Zn(2+)</name>
        <dbReference type="ChEBI" id="CHEBI:29105"/>
    </ligand>
</feature>
<feature type="binding site" evidence="1">
    <location>
        <position position="155"/>
    </location>
    <ligand>
        <name>Zn(2+)</name>
        <dbReference type="ChEBI" id="CHEBI:29105"/>
    </ligand>
</feature>
<feature type="binding site" evidence="1">
    <location>
        <position position="184"/>
    </location>
    <ligand>
        <name>Zn(2+)</name>
        <dbReference type="ChEBI" id="CHEBI:29105"/>
    </ligand>
</feature>
<feature type="binding site" evidence="1">
    <location>
        <position position="187"/>
    </location>
    <ligand>
        <name>Zn(2+)</name>
        <dbReference type="ChEBI" id="CHEBI:29105"/>
    </ligand>
</feature>
<organism>
    <name type="scientific">Bacteroides fragilis (strain ATCC 25285 / DSM 2151 / CCUG 4856 / JCM 11019 / LMG 10263 / NCTC 9343 / Onslow / VPI 2553 / EN-2)</name>
    <dbReference type="NCBI Taxonomy" id="272559"/>
    <lineage>
        <taxon>Bacteria</taxon>
        <taxon>Pseudomonadati</taxon>
        <taxon>Bacteroidota</taxon>
        <taxon>Bacteroidia</taxon>
        <taxon>Bacteroidales</taxon>
        <taxon>Bacteroidaceae</taxon>
        <taxon>Bacteroides</taxon>
    </lineage>
</organism>
<protein>
    <recommendedName>
        <fullName evidence="1">Thymidine kinase</fullName>
        <ecNumber evidence="1">2.7.1.21</ecNumber>
    </recommendedName>
</protein>
<name>KITH_BACFN</name>
<accession>Q5LHP5</accession>
<gene>
    <name evidence="1" type="primary">tdk</name>
    <name type="ordered locus">BF0583</name>
</gene>
<comment type="catalytic activity">
    <reaction evidence="1">
        <text>thymidine + ATP = dTMP + ADP + H(+)</text>
        <dbReference type="Rhea" id="RHEA:19129"/>
        <dbReference type="ChEBI" id="CHEBI:15378"/>
        <dbReference type="ChEBI" id="CHEBI:17748"/>
        <dbReference type="ChEBI" id="CHEBI:30616"/>
        <dbReference type="ChEBI" id="CHEBI:63528"/>
        <dbReference type="ChEBI" id="CHEBI:456216"/>
        <dbReference type="EC" id="2.7.1.21"/>
    </reaction>
</comment>
<comment type="subunit">
    <text evidence="1">Homotetramer.</text>
</comment>
<comment type="subcellular location">
    <subcellularLocation>
        <location evidence="1">Cytoplasm</location>
    </subcellularLocation>
</comment>
<comment type="similarity">
    <text evidence="1">Belongs to the thymidine kinase family.</text>
</comment>
<keyword id="KW-0067">ATP-binding</keyword>
<keyword id="KW-0963">Cytoplasm</keyword>
<keyword id="KW-0237">DNA synthesis</keyword>
<keyword id="KW-0418">Kinase</keyword>
<keyword id="KW-0479">Metal-binding</keyword>
<keyword id="KW-0547">Nucleotide-binding</keyword>
<keyword id="KW-0808">Transferase</keyword>
<keyword id="KW-0862">Zinc</keyword>
<sequence>MVLFSEDHIQETRRRGRIEVICGSMFSGKTEELIRRMKRAKFARQRVEIFKPAIDTRYSEGDVVSHDSNSISSTPIDSSASILLFTSEIDVVGIDEAQFFDSGLIDVCNQLANNGVRVIIAGLDMDFKGIPFGPMPALCAIADEVSKVHAICVKCGQLASFSHRTVKNDKQVLLGETAQYEPLCRECYQRALQEDREKS</sequence>
<proteinExistence type="inferred from homology"/>
<dbReference type="EC" id="2.7.1.21" evidence="1"/>
<dbReference type="EMBL" id="CR626927">
    <property type="protein sequence ID" value="CAH06335.1"/>
    <property type="molecule type" value="Genomic_DNA"/>
</dbReference>
<dbReference type="RefSeq" id="WP_010992105.1">
    <property type="nucleotide sequence ID" value="NC_003228.3"/>
</dbReference>
<dbReference type="SMR" id="Q5LHP5"/>
<dbReference type="PaxDb" id="272559-BF9343_0556"/>
<dbReference type="GeneID" id="60367771"/>
<dbReference type="KEGG" id="bfs:BF9343_0556"/>
<dbReference type="eggNOG" id="COG1435">
    <property type="taxonomic scope" value="Bacteria"/>
</dbReference>
<dbReference type="HOGENOM" id="CLU_064400_3_0_10"/>
<dbReference type="Proteomes" id="UP000006731">
    <property type="component" value="Chromosome"/>
</dbReference>
<dbReference type="GO" id="GO:0005829">
    <property type="term" value="C:cytosol"/>
    <property type="evidence" value="ECO:0007669"/>
    <property type="project" value="TreeGrafter"/>
</dbReference>
<dbReference type="GO" id="GO:0005524">
    <property type="term" value="F:ATP binding"/>
    <property type="evidence" value="ECO:0007669"/>
    <property type="project" value="UniProtKB-UniRule"/>
</dbReference>
<dbReference type="GO" id="GO:0004797">
    <property type="term" value="F:thymidine kinase activity"/>
    <property type="evidence" value="ECO:0007669"/>
    <property type="project" value="UniProtKB-UniRule"/>
</dbReference>
<dbReference type="GO" id="GO:0008270">
    <property type="term" value="F:zinc ion binding"/>
    <property type="evidence" value="ECO:0007669"/>
    <property type="project" value="UniProtKB-UniRule"/>
</dbReference>
<dbReference type="GO" id="GO:0071897">
    <property type="term" value="P:DNA biosynthetic process"/>
    <property type="evidence" value="ECO:0007669"/>
    <property type="project" value="UniProtKB-KW"/>
</dbReference>
<dbReference type="GO" id="GO:0046104">
    <property type="term" value="P:thymidine metabolic process"/>
    <property type="evidence" value="ECO:0007669"/>
    <property type="project" value="TreeGrafter"/>
</dbReference>
<dbReference type="FunFam" id="3.30.60.20:FF:000048">
    <property type="entry name" value="Thymidine kinase"/>
    <property type="match status" value="1"/>
</dbReference>
<dbReference type="FunFam" id="3.40.50.300:FF:000384">
    <property type="entry name" value="Thymidine kinase"/>
    <property type="match status" value="1"/>
</dbReference>
<dbReference type="Gene3D" id="3.30.60.20">
    <property type="match status" value="1"/>
</dbReference>
<dbReference type="Gene3D" id="3.40.50.300">
    <property type="entry name" value="P-loop containing nucleotide triphosphate hydrolases"/>
    <property type="match status" value="1"/>
</dbReference>
<dbReference type="HAMAP" id="MF_00124">
    <property type="entry name" value="Thymidine_kinase"/>
    <property type="match status" value="1"/>
</dbReference>
<dbReference type="InterPro" id="IPR027417">
    <property type="entry name" value="P-loop_NTPase"/>
</dbReference>
<dbReference type="InterPro" id="IPR001267">
    <property type="entry name" value="Thymidine_kinase"/>
</dbReference>
<dbReference type="NCBIfam" id="NF003296">
    <property type="entry name" value="PRK04296.1-1"/>
    <property type="match status" value="1"/>
</dbReference>
<dbReference type="PANTHER" id="PTHR11441">
    <property type="entry name" value="THYMIDINE KINASE"/>
    <property type="match status" value="1"/>
</dbReference>
<dbReference type="PANTHER" id="PTHR11441:SF0">
    <property type="entry name" value="THYMIDINE KINASE, CYTOSOLIC"/>
    <property type="match status" value="1"/>
</dbReference>
<dbReference type="Pfam" id="PF00265">
    <property type="entry name" value="TK"/>
    <property type="match status" value="1"/>
</dbReference>
<dbReference type="PIRSF" id="PIRSF035805">
    <property type="entry name" value="TK_cell"/>
    <property type="match status" value="1"/>
</dbReference>
<dbReference type="SUPFAM" id="SSF57716">
    <property type="entry name" value="Glucocorticoid receptor-like (DNA-binding domain)"/>
    <property type="match status" value="1"/>
</dbReference>
<dbReference type="SUPFAM" id="SSF52540">
    <property type="entry name" value="P-loop containing nucleoside triphosphate hydrolases"/>
    <property type="match status" value="1"/>
</dbReference>